<keyword id="KW-0027">Amidation</keyword>
<keyword id="KW-0165">Cleavage on pair of basic residues</keyword>
<keyword id="KW-0903">Direct protein sequencing</keyword>
<keyword id="KW-0527">Neuropeptide</keyword>
<keyword id="KW-1185">Reference proteome</keyword>
<keyword id="KW-0964">Secreted</keyword>
<keyword id="KW-0732">Signal</keyword>
<reference key="1">
    <citation type="journal article" date="2010" name="Science">
        <title>Genomic comparison of the ants Camponotus floridanus and Harpegnathos saltator.</title>
        <authorList>
            <person name="Bonasio R."/>
            <person name="Zhang G."/>
            <person name="Ye C."/>
            <person name="Mutti N.S."/>
            <person name="Fang X."/>
            <person name="Qin N."/>
            <person name="Donahue G."/>
            <person name="Yang P."/>
            <person name="Li Q."/>
            <person name="Li C."/>
            <person name="Zhang P."/>
            <person name="Huang Z."/>
            <person name="Berger S.L."/>
            <person name="Reinberg D."/>
            <person name="Wang J."/>
            <person name="Liebig J."/>
        </authorList>
    </citation>
    <scope>NUCLEOTIDE SEQUENCE [LARGE SCALE GENOMIC DNA]</scope>
</reference>
<reference evidence="5" key="2">
    <citation type="journal article" date="2015" name="J. Proteome Res.">
        <title>Neuropeptidomics of the carpenter ant Camponotus floridanus.</title>
        <authorList>
            <person name="Schmitt F."/>
            <person name="Vanselow J.T."/>
            <person name="Schlosser A."/>
            <person name="Kahnt J."/>
            <person name="Roessler W."/>
            <person name="Wegener C."/>
        </authorList>
    </citation>
    <scope>PROTEIN SEQUENCE OF 41-53</scope>
    <scope>TISSUE SPECIFICITY</scope>
    <scope>AMIDATION AT PHE-53</scope>
    <scope>MASS SPECTROMETRY</scope>
    <scope>IDENTIFICATION BY MASS SPECTROMETRY</scope>
</reference>
<comment type="function">
    <text evidence="1">Neuropeptide stimulator of juvenile hormone synthesis.</text>
</comment>
<comment type="subcellular location">
    <subcellularLocation>
        <location evidence="6">Secreted</location>
    </subcellularLocation>
</comment>
<comment type="tissue specificity">
    <text evidence="3">Expressed in brain and ventral ganglia but not in the retrocerebral complex (at protein level).</text>
</comment>
<comment type="mass spectrometry" mass="1427.74" method="Electrospray" evidence="3"/>
<accession>E2A1R1</accession>
<protein>
    <recommendedName>
        <fullName evidence="4">Allatotropin</fullName>
    </recommendedName>
</protein>
<name>ALLT_CAMFO</name>
<evidence type="ECO:0000250" key="1">
    <source>
        <dbReference type="UniProtKB" id="P21786"/>
    </source>
</evidence>
<evidence type="ECO:0000255" key="2"/>
<evidence type="ECO:0000269" key="3">
    <source>
    </source>
</evidence>
<evidence type="ECO:0000303" key="4">
    <source>
    </source>
</evidence>
<evidence type="ECO:0000305" key="5"/>
<evidence type="ECO:0000305" key="6">
    <source>
    </source>
</evidence>
<evidence type="ECO:0000312" key="7">
    <source>
        <dbReference type="EMBL" id="EFN72734.1"/>
    </source>
</evidence>
<dbReference type="EMBL" id="GL435766">
    <property type="protein sequence ID" value="EFN72734.1"/>
    <property type="molecule type" value="Genomic_DNA"/>
</dbReference>
<dbReference type="OMA" id="FFKHRTK"/>
<dbReference type="Proteomes" id="UP000000311">
    <property type="component" value="Unassembled WGS sequence"/>
</dbReference>
<dbReference type="GO" id="GO:0005576">
    <property type="term" value="C:extracellular region"/>
    <property type="evidence" value="ECO:0007669"/>
    <property type="project" value="UniProtKB-SubCell"/>
</dbReference>
<dbReference type="GO" id="GO:0007218">
    <property type="term" value="P:neuropeptide signaling pathway"/>
    <property type="evidence" value="ECO:0007669"/>
    <property type="project" value="UniProtKB-KW"/>
</dbReference>
<feature type="signal peptide" evidence="2">
    <location>
        <begin position="1"/>
        <end position="23"/>
    </location>
</feature>
<feature type="propeptide" id="PRO_0000434194" evidence="6">
    <location>
        <begin position="24"/>
        <end position="40"/>
    </location>
</feature>
<feature type="peptide" id="PRO_0000434195" description="Allatotropin" evidence="3">
    <location>
        <begin position="41"/>
        <end position="53"/>
    </location>
</feature>
<feature type="propeptide" id="PRO_0000434196" evidence="6">
    <location>
        <begin position="57"/>
        <end position="122"/>
    </location>
</feature>
<feature type="modified residue" description="Phenylalanine amide" evidence="3">
    <location>
        <position position="53"/>
    </location>
</feature>
<proteinExistence type="evidence at protein level"/>
<organism>
    <name type="scientific">Camponotus floridanus</name>
    <name type="common">Florida carpenter ant</name>
    <dbReference type="NCBI Taxonomy" id="104421"/>
    <lineage>
        <taxon>Eukaryota</taxon>
        <taxon>Metazoa</taxon>
        <taxon>Ecdysozoa</taxon>
        <taxon>Arthropoda</taxon>
        <taxon>Hexapoda</taxon>
        <taxon>Insecta</taxon>
        <taxon>Pterygota</taxon>
        <taxon>Neoptera</taxon>
        <taxon>Endopterygota</taxon>
        <taxon>Hymenoptera</taxon>
        <taxon>Apocrita</taxon>
        <taxon>Aculeata</taxon>
        <taxon>Formicoidea</taxon>
        <taxon>Formicidae</taxon>
        <taxon>Formicinae</taxon>
        <taxon>Camponotus</taxon>
    </lineage>
</organism>
<gene>
    <name evidence="7" type="ORF">EAG_06920</name>
</gene>
<sequence length="122" mass="13568">MRVILAITLLFVAGSFIATASKGRNYPRFFKHRMKLREIRGFKPEYISTAIGFGKRESPAERIPDLRGRERILLPVLRNFPRGVRILVPFSQLQVDAASMSSAAKSTVYAGLGDDSKKGTIA</sequence>